<gene>
    <name type="primary">Ikzf3</name>
    <name type="synonym">Zfpn1a3</name>
    <name type="synonym">Znfn1a3</name>
</gene>
<evidence type="ECO:0000250" key="1">
    <source>
        <dbReference type="UniProtKB" id="Q9UKT9"/>
    </source>
</evidence>
<evidence type="ECO:0000255" key="2">
    <source>
        <dbReference type="PROSITE-ProRule" id="PRU00042"/>
    </source>
</evidence>
<evidence type="ECO:0000256" key="3">
    <source>
        <dbReference type="SAM" id="MobiDB-lite"/>
    </source>
</evidence>
<evidence type="ECO:0000269" key="4">
    <source>
    </source>
</evidence>
<evidence type="ECO:0000269" key="5">
    <source>
    </source>
</evidence>
<evidence type="ECO:0000269" key="6">
    <source>
    </source>
</evidence>
<evidence type="ECO:0000305" key="7"/>
<evidence type="ECO:0007744" key="8">
    <source>
    </source>
</evidence>
<dbReference type="EMBL" id="AF001293">
    <property type="protein sequence ID" value="AAB58795.1"/>
    <property type="molecule type" value="mRNA"/>
</dbReference>
<dbReference type="EMBL" id="AL591125">
    <property type="status" value="NOT_ANNOTATED_CDS"/>
    <property type="molecule type" value="Genomic_DNA"/>
</dbReference>
<dbReference type="EMBL" id="AL591390">
    <property type="status" value="NOT_ANNOTATED_CDS"/>
    <property type="molecule type" value="Genomic_DNA"/>
</dbReference>
<dbReference type="EMBL" id="CH466556">
    <property type="protein sequence ID" value="EDL16146.1"/>
    <property type="molecule type" value="Genomic_DNA"/>
</dbReference>
<dbReference type="CCDS" id="CCDS25352.1"/>
<dbReference type="RefSeq" id="NP_035901.1">
    <property type="nucleotide sequence ID" value="NM_011771.1"/>
</dbReference>
<dbReference type="SMR" id="O08900"/>
<dbReference type="BioGRID" id="204702">
    <property type="interactions" value="26"/>
</dbReference>
<dbReference type="CORUM" id="O08900"/>
<dbReference type="FunCoup" id="O08900">
    <property type="interactions" value="1589"/>
</dbReference>
<dbReference type="IntAct" id="O08900">
    <property type="interactions" value="3"/>
</dbReference>
<dbReference type="STRING" id="10090.ENSMUSP00000099430"/>
<dbReference type="GlyGen" id="O08900">
    <property type="glycosylation" value="3 sites, 1 N-linked glycan (1 site)"/>
</dbReference>
<dbReference type="iPTMnet" id="O08900"/>
<dbReference type="PhosphoSitePlus" id="O08900"/>
<dbReference type="jPOST" id="O08900"/>
<dbReference type="PaxDb" id="10090-ENSMUSP00000099430"/>
<dbReference type="PeptideAtlas" id="O08900"/>
<dbReference type="ProteomicsDB" id="267116"/>
<dbReference type="Antibodypedia" id="4475">
    <property type="antibodies" value="517 antibodies from 40 providers"/>
</dbReference>
<dbReference type="DNASU" id="22780"/>
<dbReference type="Ensembl" id="ENSMUST00000103141.4">
    <property type="protein sequence ID" value="ENSMUSP00000099430.4"/>
    <property type="gene ID" value="ENSMUSG00000018168.9"/>
</dbReference>
<dbReference type="GeneID" id="22780"/>
<dbReference type="KEGG" id="mmu:22780"/>
<dbReference type="UCSC" id="uc007lgl.1">
    <property type="organism name" value="mouse"/>
</dbReference>
<dbReference type="AGR" id="MGI:1342542"/>
<dbReference type="CTD" id="22806"/>
<dbReference type="MGI" id="MGI:1342542">
    <property type="gene designation" value="Ikzf3"/>
</dbReference>
<dbReference type="VEuPathDB" id="HostDB:ENSMUSG00000018168"/>
<dbReference type="eggNOG" id="KOG1721">
    <property type="taxonomic scope" value="Eukaryota"/>
</dbReference>
<dbReference type="GeneTree" id="ENSGT00940000160462"/>
<dbReference type="HOGENOM" id="CLU_025502_1_0_1"/>
<dbReference type="InParanoid" id="O08900"/>
<dbReference type="OMA" id="MMQGRMM"/>
<dbReference type="OrthoDB" id="6417347at2759"/>
<dbReference type="PhylomeDB" id="O08900"/>
<dbReference type="TreeFam" id="TF331189"/>
<dbReference type="BioGRID-ORCS" id="22780">
    <property type="hits" value="4 hits in 80 CRISPR screens"/>
</dbReference>
<dbReference type="ChiTaRS" id="Ikzf3">
    <property type="organism name" value="mouse"/>
</dbReference>
<dbReference type="PRO" id="PR:O08900"/>
<dbReference type="Proteomes" id="UP000000589">
    <property type="component" value="Chromosome 11"/>
</dbReference>
<dbReference type="RNAct" id="O08900">
    <property type="molecule type" value="protein"/>
</dbReference>
<dbReference type="Bgee" id="ENSMUSG00000018168">
    <property type="expression patterns" value="Expressed in mesenteric lymph node and 77 other cell types or tissues"/>
</dbReference>
<dbReference type="GO" id="GO:0005737">
    <property type="term" value="C:cytoplasm"/>
    <property type="evidence" value="ECO:0000314"/>
    <property type="project" value="UniProtKB"/>
</dbReference>
<dbReference type="GO" id="GO:0005829">
    <property type="term" value="C:cytosol"/>
    <property type="evidence" value="ECO:0007669"/>
    <property type="project" value="Ensembl"/>
</dbReference>
<dbReference type="GO" id="GO:0005654">
    <property type="term" value="C:nucleoplasm"/>
    <property type="evidence" value="ECO:0007669"/>
    <property type="project" value="Ensembl"/>
</dbReference>
<dbReference type="GO" id="GO:0005634">
    <property type="term" value="C:nucleus"/>
    <property type="evidence" value="ECO:0000314"/>
    <property type="project" value="UniProtKB"/>
</dbReference>
<dbReference type="GO" id="GO:0001228">
    <property type="term" value="F:DNA-binding transcription activator activity, RNA polymerase II-specific"/>
    <property type="evidence" value="ECO:0000314"/>
    <property type="project" value="NTNU_SB"/>
</dbReference>
<dbReference type="GO" id="GO:0042826">
    <property type="term" value="F:histone deacetylase binding"/>
    <property type="evidence" value="ECO:0007669"/>
    <property type="project" value="Ensembl"/>
</dbReference>
<dbReference type="GO" id="GO:1990841">
    <property type="term" value="F:promoter-specific chromatin binding"/>
    <property type="evidence" value="ECO:0007669"/>
    <property type="project" value="Ensembl"/>
</dbReference>
<dbReference type="GO" id="GO:0046982">
    <property type="term" value="F:protein heterodimerization activity"/>
    <property type="evidence" value="ECO:0000250"/>
    <property type="project" value="UniProtKB"/>
</dbReference>
<dbReference type="GO" id="GO:0042803">
    <property type="term" value="F:protein homodimerization activity"/>
    <property type="evidence" value="ECO:0000250"/>
    <property type="project" value="UniProtKB"/>
</dbReference>
<dbReference type="GO" id="GO:0000977">
    <property type="term" value="F:RNA polymerase II transcription regulatory region sequence-specific DNA binding"/>
    <property type="evidence" value="ECO:0000314"/>
    <property type="project" value="NTNU_SB"/>
</dbReference>
<dbReference type="GO" id="GO:0043565">
    <property type="term" value="F:sequence-specific DNA binding"/>
    <property type="evidence" value="ECO:0000314"/>
    <property type="project" value="UniProtKB"/>
</dbReference>
<dbReference type="GO" id="GO:0008270">
    <property type="term" value="F:zinc ion binding"/>
    <property type="evidence" value="ECO:0007669"/>
    <property type="project" value="UniProtKB-KW"/>
</dbReference>
<dbReference type="GO" id="GO:0030183">
    <property type="term" value="P:B cell differentiation"/>
    <property type="evidence" value="ECO:0000315"/>
    <property type="project" value="UniProtKB"/>
</dbReference>
<dbReference type="GO" id="GO:0045944">
    <property type="term" value="P:positive regulation of transcription by RNA polymerase II"/>
    <property type="evidence" value="ECO:0000314"/>
    <property type="project" value="NTNU_SB"/>
</dbReference>
<dbReference type="GO" id="GO:0042981">
    <property type="term" value="P:regulation of apoptotic process"/>
    <property type="evidence" value="ECO:0000250"/>
    <property type="project" value="UniProtKB"/>
</dbReference>
<dbReference type="GO" id="GO:0045577">
    <property type="term" value="P:regulation of B cell differentiation"/>
    <property type="evidence" value="ECO:0000315"/>
    <property type="project" value="UniProtKB"/>
</dbReference>
<dbReference type="GO" id="GO:0030888">
    <property type="term" value="P:regulation of B cell proliferation"/>
    <property type="evidence" value="ECO:0000315"/>
    <property type="project" value="UniProtKB"/>
</dbReference>
<dbReference type="GO" id="GO:0045619">
    <property type="term" value="P:regulation of lymphocyte differentiation"/>
    <property type="evidence" value="ECO:0000315"/>
    <property type="project" value="UniProtKB"/>
</dbReference>
<dbReference type="GO" id="GO:0009617">
    <property type="term" value="P:response to bacterium"/>
    <property type="evidence" value="ECO:0000270"/>
    <property type="project" value="MGI"/>
</dbReference>
<dbReference type="GO" id="GO:0030217">
    <property type="term" value="P:T cell differentiation"/>
    <property type="evidence" value="ECO:0000315"/>
    <property type="project" value="UniProtKB"/>
</dbReference>
<dbReference type="FunFam" id="3.30.160.60:FF:000073">
    <property type="entry name" value="IKAROS family zinc finger 1"/>
    <property type="match status" value="1"/>
</dbReference>
<dbReference type="FunFam" id="3.30.160.60:FF:000265">
    <property type="entry name" value="IKAROS family zinc finger 1"/>
    <property type="match status" value="1"/>
</dbReference>
<dbReference type="FunFam" id="3.30.160.60:FF:000525">
    <property type="entry name" value="IKAROS family zinc finger 1"/>
    <property type="match status" value="1"/>
</dbReference>
<dbReference type="FunFam" id="3.30.160.60:FF:000080">
    <property type="entry name" value="IKAROS family zinc finger 4"/>
    <property type="match status" value="1"/>
</dbReference>
<dbReference type="FunFam" id="3.30.160.60:FF:000168">
    <property type="entry name" value="zinc finger protein Eos isoform X1"/>
    <property type="match status" value="1"/>
</dbReference>
<dbReference type="Gene3D" id="3.30.160.60">
    <property type="entry name" value="Classic Zinc Finger"/>
    <property type="match status" value="5"/>
</dbReference>
<dbReference type="InterPro" id="IPR050589">
    <property type="entry name" value="Ikaros_C2H2-ZF"/>
</dbReference>
<dbReference type="InterPro" id="IPR036236">
    <property type="entry name" value="Znf_C2H2_sf"/>
</dbReference>
<dbReference type="InterPro" id="IPR013087">
    <property type="entry name" value="Znf_C2H2_type"/>
</dbReference>
<dbReference type="PANTHER" id="PTHR24404">
    <property type="entry name" value="ZINC FINGER PROTEIN"/>
    <property type="match status" value="1"/>
</dbReference>
<dbReference type="PANTHER" id="PTHR24404:SF23">
    <property type="entry name" value="ZINC FINGER PROTEIN AIOLOS"/>
    <property type="match status" value="1"/>
</dbReference>
<dbReference type="Pfam" id="PF00096">
    <property type="entry name" value="zf-C2H2"/>
    <property type="match status" value="2"/>
</dbReference>
<dbReference type="SMART" id="SM00355">
    <property type="entry name" value="ZnF_C2H2"/>
    <property type="match status" value="6"/>
</dbReference>
<dbReference type="SUPFAM" id="SSF57667">
    <property type="entry name" value="beta-beta-alpha zinc fingers"/>
    <property type="match status" value="3"/>
</dbReference>
<dbReference type="PROSITE" id="PS00028">
    <property type="entry name" value="ZINC_FINGER_C2H2_1"/>
    <property type="match status" value="4"/>
</dbReference>
<dbReference type="PROSITE" id="PS50157">
    <property type="entry name" value="ZINC_FINGER_C2H2_2"/>
    <property type="match status" value="4"/>
</dbReference>
<name>IKZF3_MOUSE</name>
<sequence>MEDIQPTVELKSTEEQPLPTESPDALNDYSLPKPHEIENVDSREAPANEDEDAGEDSMKVKDEYSDRDENIMKPEPMGDAEESEMPYSYAREYSDYESIKLERHVPYDNSRPTGGKMNCDVCGLSCISFNVLMVHKRSHTGERPFQCNQCGASFTQKGNLLRHIKLHTGEKPFKCHLCNYACQRRDALTGHLRTHSVEKPYKCEFCGRSYKQRSSLEEHKERCRAFLQNPDLGDAASVEARHIKAEMGSERALVLDRLASNVAKRKSSMPQKFIGEKRHCFDANYNPGYMYEKENEMMQTRMMDQAINNAISYLGAEALRPLVQTPPAPTSEMVPVISSVYPIALTRADMPNGAPQEMEKKRILLPEKILPSERGLSPNNSAQDSTDTDSNHEDRQHLYQQSHVVLPQARNGMPLLKEVPRSFELLKPPPICLRDSIKVINKEGEVMDVFRCDHCHVLFLDYVMFTIHMGCHGFRDPFECNMCGYRSHDRYEFSSHIARGEHRAMLK</sequence>
<reference key="1">
    <citation type="journal article" date="1997" name="EMBO J.">
        <title>Aiolos, a lymphoid restricted transcription factor that interacts with Ikaros to regulate lymphocyte differentiation.</title>
        <authorList>
            <person name="Morgan B."/>
            <person name="Sun L."/>
            <person name="Avitahl N."/>
            <person name="Andrikopoulos K."/>
            <person name="Ikeda T."/>
            <person name="Gonzales E."/>
            <person name="Wu P."/>
            <person name="Neben S."/>
            <person name="Georgopoulos K."/>
        </authorList>
    </citation>
    <scope>NUCLEOTIDE SEQUENCE [MRNA]</scope>
    <scope>FUNCTION</scope>
    <scope>INTERACTION WITH IKZF1</scope>
    <scope>SUBCELLULAR LOCATION</scope>
    <scope>TISSUE SPECIFICITY</scope>
</reference>
<reference key="2">
    <citation type="journal article" date="2009" name="PLoS Biol.">
        <title>Lineage-specific biology revealed by a finished genome assembly of the mouse.</title>
        <authorList>
            <person name="Church D.M."/>
            <person name="Goodstadt L."/>
            <person name="Hillier L.W."/>
            <person name="Zody M.C."/>
            <person name="Goldstein S."/>
            <person name="She X."/>
            <person name="Bult C.J."/>
            <person name="Agarwala R."/>
            <person name="Cherry J.L."/>
            <person name="DiCuccio M."/>
            <person name="Hlavina W."/>
            <person name="Kapustin Y."/>
            <person name="Meric P."/>
            <person name="Maglott D."/>
            <person name="Birtle Z."/>
            <person name="Marques A.C."/>
            <person name="Graves T."/>
            <person name="Zhou S."/>
            <person name="Teague B."/>
            <person name="Potamousis K."/>
            <person name="Churas C."/>
            <person name="Place M."/>
            <person name="Herschleb J."/>
            <person name="Runnheim R."/>
            <person name="Forrest D."/>
            <person name="Amos-Landgraf J."/>
            <person name="Schwartz D.C."/>
            <person name="Cheng Z."/>
            <person name="Lindblad-Toh K."/>
            <person name="Eichler E.E."/>
            <person name="Ponting C.P."/>
        </authorList>
    </citation>
    <scope>NUCLEOTIDE SEQUENCE [LARGE SCALE GENOMIC DNA]</scope>
    <source>
        <strain>C57BL/6J</strain>
    </source>
</reference>
<reference key="3">
    <citation type="submission" date="2005-07" db="EMBL/GenBank/DDBJ databases">
        <authorList>
            <person name="Mural R.J."/>
            <person name="Adams M.D."/>
            <person name="Myers E.W."/>
            <person name="Smith H.O."/>
            <person name="Venter J.C."/>
        </authorList>
    </citation>
    <scope>NUCLEOTIDE SEQUENCE [LARGE SCALE GENOMIC DNA]</scope>
</reference>
<reference key="4">
    <citation type="journal article" date="1998" name="Immunity">
        <title>Aiolos regulates B cell activation and maturation to effector state.</title>
        <authorList>
            <person name="Wang J.H."/>
            <person name="Avitahl N."/>
            <person name="Cariappa A."/>
            <person name="Friedrich C."/>
            <person name="Ikeda T."/>
            <person name="Renold A."/>
            <person name="Andrikopoulos K."/>
            <person name="Liang L."/>
            <person name="Pillai S."/>
            <person name="Morgan B.A."/>
            <person name="Georgopoulos K."/>
        </authorList>
    </citation>
    <scope>FUNCTION</scope>
</reference>
<reference key="5">
    <citation type="journal article" date="2010" name="Cell">
        <title>A tissue-specific atlas of mouse protein phosphorylation and expression.</title>
        <authorList>
            <person name="Huttlin E.L."/>
            <person name="Jedrychowski M.P."/>
            <person name="Elias J.E."/>
            <person name="Goswami T."/>
            <person name="Rad R."/>
            <person name="Beausoleil S.A."/>
            <person name="Villen J."/>
            <person name="Haas W."/>
            <person name="Sowa M.E."/>
            <person name="Gygi S.P."/>
        </authorList>
    </citation>
    <scope>PHOSPHORYLATION [LARGE SCALE ANALYSIS] AT THR-20; SER-22; SER-42 AND SER-377</scope>
    <scope>IDENTIFICATION BY MASS SPECTROMETRY [LARGE SCALE ANALYSIS]</scope>
    <source>
        <tissue>Lung</tissue>
        <tissue>Spleen</tissue>
    </source>
</reference>
<reference key="6">
    <citation type="journal article" date="2021" name="Nat. Immunol.">
        <title>A variant in human AIOLOS impairs adaptive immunity by interfering with IKAROS.</title>
        <authorList>
            <person name="Yamashita M."/>
            <person name="Kuehn H.S."/>
            <person name="Okuyama K."/>
            <person name="Okada S."/>
            <person name="Inoue Y."/>
            <person name="Mitsuiki N."/>
            <person name="Imai K."/>
            <person name="Takagi M."/>
            <person name="Kanegane H."/>
            <person name="Takeuchi M."/>
            <person name="Shimojo N."/>
            <person name="Tsumura M."/>
            <person name="Padhi A.K."/>
            <person name="Zhang K.Y.J."/>
            <person name="Boisson B."/>
            <person name="Casanova J.L."/>
            <person name="Ohara O."/>
            <person name="Rosenzweig S.D."/>
            <person name="Taniuchi I."/>
            <person name="Morio T."/>
        </authorList>
    </citation>
    <scope>FUNCTION</scope>
    <scope>MUTAGENESIS OF GLY-158</scope>
</reference>
<protein>
    <recommendedName>
        <fullName>Zinc finger protein Aiolos</fullName>
    </recommendedName>
    <alternativeName>
        <fullName>Ikaros family zinc finger protein 3</fullName>
    </alternativeName>
</protein>
<feature type="chain" id="PRO_0000047091" description="Zinc finger protein Aiolos">
    <location>
        <begin position="1"/>
        <end position="507"/>
    </location>
</feature>
<feature type="zinc finger region" description="C2H2-type 1" evidence="2">
    <location>
        <begin position="117"/>
        <end position="139"/>
    </location>
</feature>
<feature type="zinc finger region" description="C2H2-type 2" evidence="2">
    <location>
        <begin position="145"/>
        <end position="167"/>
    </location>
</feature>
<feature type="zinc finger region" description="C2H2-type 3" evidence="2">
    <location>
        <begin position="173"/>
        <end position="195"/>
    </location>
</feature>
<feature type="zinc finger region" description="C2H2-type 4; atypical" evidence="2">
    <location>
        <begin position="201"/>
        <end position="223"/>
    </location>
</feature>
<feature type="zinc finger region" description="C2H2-type 5" evidence="2">
    <location>
        <begin position="450"/>
        <end position="472"/>
    </location>
</feature>
<feature type="zinc finger region" description="C2H2-type 6; atypical" evidence="2">
    <location>
        <begin position="478"/>
        <end position="502"/>
    </location>
</feature>
<feature type="region of interest" description="Disordered" evidence="3">
    <location>
        <begin position="1"/>
        <end position="85"/>
    </location>
</feature>
<feature type="region of interest" description="Disordered" evidence="3">
    <location>
        <begin position="370"/>
        <end position="396"/>
    </location>
</feature>
<feature type="region of interest" description="Mediates homodimerization and heterodimerization" evidence="1">
    <location>
        <begin position="450"/>
        <end position="502"/>
    </location>
</feature>
<feature type="compositionally biased region" description="Basic and acidic residues" evidence="3">
    <location>
        <begin position="33"/>
        <end position="46"/>
    </location>
</feature>
<feature type="compositionally biased region" description="Basic and acidic residues" evidence="3">
    <location>
        <begin position="56"/>
        <end position="72"/>
    </location>
</feature>
<feature type="modified residue" description="Phosphothreonine" evidence="8">
    <location>
        <position position="20"/>
    </location>
</feature>
<feature type="modified residue" description="Phosphoserine" evidence="8">
    <location>
        <position position="22"/>
    </location>
</feature>
<feature type="modified residue" description="Phosphoserine" evidence="8">
    <location>
        <position position="42"/>
    </location>
</feature>
<feature type="modified residue" description="Phosphothreonine" evidence="1">
    <location>
        <position position="325"/>
    </location>
</feature>
<feature type="modified residue" description="Phosphoserine" evidence="8">
    <location>
        <position position="377"/>
    </location>
</feature>
<feature type="cross-link" description="Glycyl lysine isopeptide (Lys-Gly) (interchain with G-Cter in SUMO2)" evidence="1">
    <location>
        <position position="61"/>
    </location>
</feature>
<feature type="cross-link" description="Glycyl lysine isopeptide (Lys-Gly) (interchain with G-Cter in SUMO2)" evidence="1">
    <location>
        <position position="73"/>
    </location>
</feature>
<feature type="cross-link" description="Glycyl lysine isopeptide (Lys-Gly) (interchain with G-Cter in SUMO2)" evidence="1">
    <location>
        <position position="100"/>
    </location>
</feature>
<feature type="cross-link" description="Glycyl lysine isopeptide (Lys-Gly) (interchain with G-Cter in SUMO2)" evidence="1">
    <location>
        <position position="244"/>
    </location>
</feature>
<feature type="mutagenesis site" description="No effect on protein abundance. Changed DNA-binding transcription factor activity. Changed sequence-specific DNA binding. Binds novel and non-specific DNA motifs and acts as a dominant negative through its homodimerization and heterodimerization activities. Profound B cell development defects observed in homozygous or heterozygous animals. Impairs the differentiation of cells in adaptive immunity." evidence="4">
    <original>G</original>
    <variation>R</variation>
    <location>
        <position position="158"/>
    </location>
</feature>
<feature type="sequence conflict" description="In Ref. 1; AAB58795." evidence="7" ref="1">
    <original>G</original>
    <variation>S</variation>
    <location>
        <position position="114"/>
    </location>
</feature>
<feature type="sequence conflict" description="In Ref. 1; AAB58795." evidence="7" ref="1">
    <original>L</original>
    <variation>F</variation>
    <location>
        <position position="319"/>
    </location>
</feature>
<feature type="sequence conflict" description="In Ref. 1; AAB58795." evidence="7" ref="1">
    <original>N</original>
    <variation>M</variation>
    <location>
        <position position="352"/>
    </location>
</feature>
<accession>O08900</accession>
<accession>B1AQE6</accession>
<comment type="function">
    <text evidence="4 5 6">Transcription factor that plays an important role in the regulation of lymphocyte differentiation. Binds to GGGAA. Plays an essential role in regulation of B-cell differentiation, proliferation and maturation to an effector state. Involved in regulating BCL2 expression and controlling apoptosis in T-cells in an IL2-dependent manner.</text>
</comment>
<comment type="subunit">
    <text evidence="1 5">Homodimer. Heterodimer with other IKAROS family members. Interacts with IKZF4 and IKZF5. Interacts with HRAS. Interacts with FOXP3; this interaction may be required for silencing target genes and regulating the suppressive activity of FOXP3-positive regulatory T-cells (Treg). Interacts with BCL21L isoform Bcl-X(L); this interaction blocks the anti-apoptotic role of BCL21L. Associates with histone deacetylase complexes containing HDAC1, MTA2 and SIN3A (By similarity). Interacts with IKZF1.</text>
</comment>
<comment type="subcellular location">
    <subcellularLocation>
        <location evidence="5">Nucleus</location>
    </subcellularLocation>
    <subcellularLocation>
        <location evidence="5">Cytoplasm</location>
    </subcellularLocation>
</comment>
<comment type="tissue specificity">
    <text evidence="5">Expression is restricted to lymphoid tissues. Expressed at highest levels in spleen and at lower levels in the thymus and bone marrow. First detected in more committed lymphoid progenitors and strongly up-regulated as these differentiate into pre-T and pre-B cell precursors.</text>
</comment>
<comment type="domain">
    <text evidence="1">C2H2-type 5 and C2H2-type 6 mediate homodimerization and heterodimerization.</text>
</comment>
<comment type="similarity">
    <text evidence="7">Belongs to the Ikaros C2H2-type zinc-finger protein family.</text>
</comment>
<keyword id="KW-0075">B-cell activation</keyword>
<keyword id="KW-0963">Cytoplasm</keyword>
<keyword id="KW-0238">DNA-binding</keyword>
<keyword id="KW-1017">Isopeptide bond</keyword>
<keyword id="KW-0479">Metal-binding</keyword>
<keyword id="KW-0539">Nucleus</keyword>
<keyword id="KW-0597">Phosphoprotein</keyword>
<keyword id="KW-1185">Reference proteome</keyword>
<keyword id="KW-0677">Repeat</keyword>
<keyword id="KW-0804">Transcription</keyword>
<keyword id="KW-0805">Transcription regulation</keyword>
<keyword id="KW-0832">Ubl conjugation</keyword>
<keyword id="KW-0862">Zinc</keyword>
<keyword id="KW-0863">Zinc-finger</keyword>
<organism>
    <name type="scientific">Mus musculus</name>
    <name type="common">Mouse</name>
    <dbReference type="NCBI Taxonomy" id="10090"/>
    <lineage>
        <taxon>Eukaryota</taxon>
        <taxon>Metazoa</taxon>
        <taxon>Chordata</taxon>
        <taxon>Craniata</taxon>
        <taxon>Vertebrata</taxon>
        <taxon>Euteleostomi</taxon>
        <taxon>Mammalia</taxon>
        <taxon>Eutheria</taxon>
        <taxon>Euarchontoglires</taxon>
        <taxon>Glires</taxon>
        <taxon>Rodentia</taxon>
        <taxon>Myomorpha</taxon>
        <taxon>Muroidea</taxon>
        <taxon>Muridae</taxon>
        <taxon>Murinae</taxon>
        <taxon>Mus</taxon>
        <taxon>Mus</taxon>
    </lineage>
</organism>
<proteinExistence type="evidence at protein level"/>